<feature type="chain" id="PRO_0000170552" description="Guanylate kinase">
    <location>
        <begin position="1"/>
        <end position="206"/>
    </location>
</feature>
<feature type="domain" description="Guanylate kinase-like" evidence="1">
    <location>
        <begin position="5"/>
        <end position="184"/>
    </location>
</feature>
<feature type="binding site" evidence="1">
    <location>
        <begin position="12"/>
        <end position="19"/>
    </location>
    <ligand>
        <name>ATP</name>
        <dbReference type="ChEBI" id="CHEBI:30616"/>
    </ligand>
</feature>
<keyword id="KW-0067">ATP-binding</keyword>
<keyword id="KW-0963">Cytoplasm</keyword>
<keyword id="KW-0418">Kinase</keyword>
<keyword id="KW-0547">Nucleotide-binding</keyword>
<keyword id="KW-1185">Reference proteome</keyword>
<keyword id="KW-0808">Transferase</keyword>
<accession>Q88WL7</accession>
<accession>F9UNY6</accession>
<evidence type="ECO:0000255" key="1">
    <source>
        <dbReference type="HAMAP-Rule" id="MF_00328"/>
    </source>
</evidence>
<proteinExistence type="inferred from homology"/>
<sequence length="206" mass="23461">MAKQGMLIVLSGPSGVGKGTVRKEIFDSDDNDFQYSVSMTTRQMRPGEVDGKDYYFVSKEEFEDEIKSGGMLEYAKYVDNYYGTPLKYIKQSLAAGKDVFLEIEVNGAMQVREKMPDGVFIFLTPPDLMELKHRIIGRGTDDMSVINKRMAKAVDEIKMMRNYDYAVINDEVPLAAERIKAIIRSERFSVKRVMPEYEEMLGDAES</sequence>
<organism>
    <name type="scientific">Lactiplantibacillus plantarum (strain ATCC BAA-793 / NCIMB 8826 / WCFS1)</name>
    <name type="common">Lactobacillus plantarum</name>
    <dbReference type="NCBI Taxonomy" id="220668"/>
    <lineage>
        <taxon>Bacteria</taxon>
        <taxon>Bacillati</taxon>
        <taxon>Bacillota</taxon>
        <taxon>Bacilli</taxon>
        <taxon>Lactobacillales</taxon>
        <taxon>Lactobacillaceae</taxon>
        <taxon>Lactiplantibacillus</taxon>
    </lineage>
</organism>
<dbReference type="EC" id="2.7.4.8" evidence="1"/>
<dbReference type="EMBL" id="AL935263">
    <property type="protein sequence ID" value="CCC78925.1"/>
    <property type="molecule type" value="Genomic_DNA"/>
</dbReference>
<dbReference type="RefSeq" id="WP_003640361.1">
    <property type="nucleotide sequence ID" value="NC_004567.2"/>
</dbReference>
<dbReference type="RefSeq" id="YP_004889439.1">
    <property type="nucleotide sequence ID" value="NC_004567.2"/>
</dbReference>
<dbReference type="SMR" id="Q88WL7"/>
<dbReference type="STRING" id="220668.lp_1612"/>
<dbReference type="EnsemblBacteria" id="CCC78925">
    <property type="protein sequence ID" value="CCC78925"/>
    <property type="gene ID" value="lp_1612"/>
</dbReference>
<dbReference type="GeneID" id="89668994"/>
<dbReference type="KEGG" id="lpl:lp_1612"/>
<dbReference type="PATRIC" id="fig|220668.9.peg.1360"/>
<dbReference type="eggNOG" id="COG0194">
    <property type="taxonomic scope" value="Bacteria"/>
</dbReference>
<dbReference type="HOGENOM" id="CLU_001715_1_0_9"/>
<dbReference type="OrthoDB" id="9808150at2"/>
<dbReference type="PhylomeDB" id="Q88WL7"/>
<dbReference type="Proteomes" id="UP000000432">
    <property type="component" value="Chromosome"/>
</dbReference>
<dbReference type="GO" id="GO:0005829">
    <property type="term" value="C:cytosol"/>
    <property type="evidence" value="ECO:0007669"/>
    <property type="project" value="TreeGrafter"/>
</dbReference>
<dbReference type="GO" id="GO:0005524">
    <property type="term" value="F:ATP binding"/>
    <property type="evidence" value="ECO:0007669"/>
    <property type="project" value="UniProtKB-UniRule"/>
</dbReference>
<dbReference type="GO" id="GO:0004385">
    <property type="term" value="F:guanylate kinase activity"/>
    <property type="evidence" value="ECO:0007669"/>
    <property type="project" value="UniProtKB-UniRule"/>
</dbReference>
<dbReference type="CDD" id="cd00071">
    <property type="entry name" value="GMPK"/>
    <property type="match status" value="1"/>
</dbReference>
<dbReference type="FunFam" id="3.40.50.300:FF:000855">
    <property type="entry name" value="Guanylate kinase"/>
    <property type="match status" value="1"/>
</dbReference>
<dbReference type="FunFam" id="3.30.63.10:FF:000002">
    <property type="entry name" value="Guanylate kinase 1"/>
    <property type="match status" value="1"/>
</dbReference>
<dbReference type="Gene3D" id="3.30.63.10">
    <property type="entry name" value="Guanylate Kinase phosphate binding domain"/>
    <property type="match status" value="1"/>
</dbReference>
<dbReference type="Gene3D" id="3.40.50.300">
    <property type="entry name" value="P-loop containing nucleotide triphosphate hydrolases"/>
    <property type="match status" value="2"/>
</dbReference>
<dbReference type="HAMAP" id="MF_00328">
    <property type="entry name" value="Guanylate_kinase"/>
    <property type="match status" value="1"/>
</dbReference>
<dbReference type="InterPro" id="IPR008145">
    <property type="entry name" value="GK/Ca_channel_bsu"/>
</dbReference>
<dbReference type="InterPro" id="IPR008144">
    <property type="entry name" value="Guanylate_kin-like_dom"/>
</dbReference>
<dbReference type="InterPro" id="IPR017665">
    <property type="entry name" value="Guanylate_kinase"/>
</dbReference>
<dbReference type="InterPro" id="IPR020590">
    <property type="entry name" value="Guanylate_kinase_CS"/>
</dbReference>
<dbReference type="InterPro" id="IPR027417">
    <property type="entry name" value="P-loop_NTPase"/>
</dbReference>
<dbReference type="NCBIfam" id="TIGR03263">
    <property type="entry name" value="guanyl_kin"/>
    <property type="match status" value="1"/>
</dbReference>
<dbReference type="PANTHER" id="PTHR23117:SF13">
    <property type="entry name" value="GUANYLATE KINASE"/>
    <property type="match status" value="1"/>
</dbReference>
<dbReference type="PANTHER" id="PTHR23117">
    <property type="entry name" value="GUANYLATE KINASE-RELATED"/>
    <property type="match status" value="1"/>
</dbReference>
<dbReference type="Pfam" id="PF00625">
    <property type="entry name" value="Guanylate_kin"/>
    <property type="match status" value="1"/>
</dbReference>
<dbReference type="SMART" id="SM00072">
    <property type="entry name" value="GuKc"/>
    <property type="match status" value="1"/>
</dbReference>
<dbReference type="SUPFAM" id="SSF52540">
    <property type="entry name" value="P-loop containing nucleoside triphosphate hydrolases"/>
    <property type="match status" value="1"/>
</dbReference>
<dbReference type="PROSITE" id="PS00856">
    <property type="entry name" value="GUANYLATE_KINASE_1"/>
    <property type="match status" value="1"/>
</dbReference>
<dbReference type="PROSITE" id="PS50052">
    <property type="entry name" value="GUANYLATE_KINASE_2"/>
    <property type="match status" value="1"/>
</dbReference>
<name>KGUA_LACPL</name>
<comment type="function">
    <text evidence="1">Essential for recycling GMP and indirectly, cGMP.</text>
</comment>
<comment type="catalytic activity">
    <reaction evidence="1">
        <text>GMP + ATP = GDP + ADP</text>
        <dbReference type="Rhea" id="RHEA:20780"/>
        <dbReference type="ChEBI" id="CHEBI:30616"/>
        <dbReference type="ChEBI" id="CHEBI:58115"/>
        <dbReference type="ChEBI" id="CHEBI:58189"/>
        <dbReference type="ChEBI" id="CHEBI:456216"/>
        <dbReference type="EC" id="2.7.4.8"/>
    </reaction>
</comment>
<comment type="subcellular location">
    <subcellularLocation>
        <location evidence="1">Cytoplasm</location>
    </subcellularLocation>
</comment>
<comment type="similarity">
    <text evidence="1">Belongs to the guanylate kinase family.</text>
</comment>
<reference key="1">
    <citation type="journal article" date="2003" name="Proc. Natl. Acad. Sci. U.S.A.">
        <title>Complete genome sequence of Lactobacillus plantarum WCFS1.</title>
        <authorList>
            <person name="Kleerebezem M."/>
            <person name="Boekhorst J."/>
            <person name="van Kranenburg R."/>
            <person name="Molenaar D."/>
            <person name="Kuipers O.P."/>
            <person name="Leer R."/>
            <person name="Tarchini R."/>
            <person name="Peters S.A."/>
            <person name="Sandbrink H.M."/>
            <person name="Fiers M.W.E.J."/>
            <person name="Stiekema W."/>
            <person name="Klein Lankhorst R.M."/>
            <person name="Bron P.A."/>
            <person name="Hoffer S.M."/>
            <person name="Nierop Groot M.N."/>
            <person name="Kerkhoven R."/>
            <person name="De Vries M."/>
            <person name="Ursing B."/>
            <person name="De Vos W.M."/>
            <person name="Siezen R.J."/>
        </authorList>
    </citation>
    <scope>NUCLEOTIDE SEQUENCE [LARGE SCALE GENOMIC DNA]</scope>
    <source>
        <strain>ATCC BAA-793 / NCIMB 8826 / WCFS1</strain>
    </source>
</reference>
<reference key="2">
    <citation type="journal article" date="2012" name="J. Bacteriol.">
        <title>Complete resequencing and reannotation of the Lactobacillus plantarum WCFS1 genome.</title>
        <authorList>
            <person name="Siezen R.J."/>
            <person name="Francke C."/>
            <person name="Renckens B."/>
            <person name="Boekhorst J."/>
            <person name="Wels M."/>
            <person name="Kleerebezem M."/>
            <person name="van Hijum S.A."/>
        </authorList>
    </citation>
    <scope>NUCLEOTIDE SEQUENCE [LARGE SCALE GENOMIC DNA]</scope>
    <scope>GENOME REANNOTATION</scope>
    <source>
        <strain>ATCC BAA-793 / NCIMB 8826 / WCFS1</strain>
    </source>
</reference>
<protein>
    <recommendedName>
        <fullName evidence="1">Guanylate kinase</fullName>
        <ecNumber evidence="1">2.7.4.8</ecNumber>
    </recommendedName>
    <alternativeName>
        <fullName evidence="1">GMP kinase</fullName>
    </alternativeName>
</protein>
<gene>
    <name evidence="1" type="primary">gmk</name>
    <name type="synonym">gmk1</name>
    <name type="ordered locus">lp_1612</name>
</gene>